<feature type="chain" id="PRO_0000309436" description="UPF0502 protein YceH">
    <location>
        <begin position="1"/>
        <end position="215"/>
    </location>
</feature>
<feature type="modified residue" description="N6-acetyllysine" evidence="1">
    <location>
        <position position="80"/>
    </location>
</feature>
<evidence type="ECO:0000255" key="1">
    <source>
        <dbReference type="HAMAP-Rule" id="MF_01584"/>
    </source>
</evidence>
<proteinExistence type="inferred from homology"/>
<organism>
    <name type="scientific">Shigella sonnei (strain Ss046)</name>
    <dbReference type="NCBI Taxonomy" id="300269"/>
    <lineage>
        <taxon>Bacteria</taxon>
        <taxon>Pseudomonadati</taxon>
        <taxon>Pseudomonadota</taxon>
        <taxon>Gammaproteobacteria</taxon>
        <taxon>Enterobacterales</taxon>
        <taxon>Enterobacteriaceae</taxon>
        <taxon>Shigella</taxon>
    </lineage>
</organism>
<keyword id="KW-0007">Acetylation</keyword>
<keyword id="KW-1185">Reference proteome</keyword>
<sequence>MKYQLTALEARVIGCLLEKQVTTPEQYPLSVNGVVTACNQKTNREPVMNLSESEVQEQLDNLVKRHYLRTVSGFGNRVTKYEQRFCNSEFGDLKLSAAEVALITTLLLRGAQTPGELRSRAARMYEFSDMAEVESTLEQLANREDGPFVVRLAREPGKRESRYMHLFSGEVEDQPAVTDMSNAVDGDLQARVEALEIEVAELKQRLDSLLAHLGD</sequence>
<gene>
    <name evidence="1" type="primary">yceH</name>
    <name type="ordered locus">SSON_1087</name>
</gene>
<name>YCEH_SHISS</name>
<comment type="similarity">
    <text evidence="1">Belongs to the UPF0502 family.</text>
</comment>
<protein>
    <recommendedName>
        <fullName evidence="1">UPF0502 protein YceH</fullName>
    </recommendedName>
</protein>
<dbReference type="EMBL" id="CP000038">
    <property type="protein sequence ID" value="AAZ87813.1"/>
    <property type="molecule type" value="Genomic_DNA"/>
</dbReference>
<dbReference type="RefSeq" id="WP_000877116.1">
    <property type="nucleotide sequence ID" value="NC_007384.1"/>
</dbReference>
<dbReference type="SMR" id="Q3Z349"/>
<dbReference type="KEGG" id="ssn:SSON_1087"/>
<dbReference type="HOGENOM" id="CLU_057831_2_0_6"/>
<dbReference type="Proteomes" id="UP000002529">
    <property type="component" value="Chromosome"/>
</dbReference>
<dbReference type="FunFam" id="1.10.10.10:FF:000196">
    <property type="entry name" value="UPF0502 protein YceH"/>
    <property type="match status" value="1"/>
</dbReference>
<dbReference type="FunFam" id="1.10.10.10:FF:000241">
    <property type="entry name" value="UPF0502 protein YceH"/>
    <property type="match status" value="1"/>
</dbReference>
<dbReference type="Gene3D" id="1.10.10.10">
    <property type="entry name" value="Winged helix-like DNA-binding domain superfamily/Winged helix DNA-binding domain"/>
    <property type="match status" value="2"/>
</dbReference>
<dbReference type="HAMAP" id="MF_01584">
    <property type="entry name" value="UPF0502"/>
    <property type="match status" value="1"/>
</dbReference>
<dbReference type="InterPro" id="IPR007432">
    <property type="entry name" value="DUF480"/>
</dbReference>
<dbReference type="InterPro" id="IPR036388">
    <property type="entry name" value="WH-like_DNA-bd_sf"/>
</dbReference>
<dbReference type="InterPro" id="IPR036390">
    <property type="entry name" value="WH_DNA-bd_sf"/>
</dbReference>
<dbReference type="NCBIfam" id="NF008413">
    <property type="entry name" value="PRK11239.1"/>
    <property type="match status" value="1"/>
</dbReference>
<dbReference type="PANTHER" id="PTHR38768">
    <property type="entry name" value="UPF0502 PROTEIN YCEH"/>
    <property type="match status" value="1"/>
</dbReference>
<dbReference type="PANTHER" id="PTHR38768:SF1">
    <property type="entry name" value="UPF0502 PROTEIN YCEH"/>
    <property type="match status" value="1"/>
</dbReference>
<dbReference type="Pfam" id="PF04337">
    <property type="entry name" value="DUF480"/>
    <property type="match status" value="1"/>
</dbReference>
<dbReference type="SUPFAM" id="SSF46785">
    <property type="entry name" value="Winged helix' DNA-binding domain"/>
    <property type="match status" value="2"/>
</dbReference>
<accession>Q3Z349</accession>
<reference key="1">
    <citation type="journal article" date="2005" name="Nucleic Acids Res.">
        <title>Genome dynamics and diversity of Shigella species, the etiologic agents of bacillary dysentery.</title>
        <authorList>
            <person name="Yang F."/>
            <person name="Yang J."/>
            <person name="Zhang X."/>
            <person name="Chen L."/>
            <person name="Jiang Y."/>
            <person name="Yan Y."/>
            <person name="Tang X."/>
            <person name="Wang J."/>
            <person name="Xiong Z."/>
            <person name="Dong J."/>
            <person name="Xue Y."/>
            <person name="Zhu Y."/>
            <person name="Xu X."/>
            <person name="Sun L."/>
            <person name="Chen S."/>
            <person name="Nie H."/>
            <person name="Peng J."/>
            <person name="Xu J."/>
            <person name="Wang Y."/>
            <person name="Yuan Z."/>
            <person name="Wen Y."/>
            <person name="Yao Z."/>
            <person name="Shen Y."/>
            <person name="Qiang B."/>
            <person name="Hou Y."/>
            <person name="Yu J."/>
            <person name="Jin Q."/>
        </authorList>
    </citation>
    <scope>NUCLEOTIDE SEQUENCE [LARGE SCALE GENOMIC DNA]</scope>
    <source>
        <strain>Ss046</strain>
    </source>
</reference>